<protein>
    <recommendedName>
        <fullName>Uncharacterized protein L143</fullName>
    </recommendedName>
</protein>
<name>YL143_MIMIV</name>
<organism>
    <name type="scientific">Acanthamoeba polyphaga mimivirus</name>
    <name type="common">APMV</name>
    <dbReference type="NCBI Taxonomy" id="212035"/>
    <lineage>
        <taxon>Viruses</taxon>
        <taxon>Varidnaviria</taxon>
        <taxon>Bamfordvirae</taxon>
        <taxon>Nucleocytoviricota</taxon>
        <taxon>Megaviricetes</taxon>
        <taxon>Imitervirales</taxon>
        <taxon>Mimiviridae</taxon>
        <taxon>Megamimivirinae</taxon>
        <taxon>Mimivirus</taxon>
        <taxon>Mimivirus bradfordmassiliense</taxon>
    </lineage>
</organism>
<reference key="1">
    <citation type="journal article" date="2004" name="Science">
        <title>The 1.2-megabase genome sequence of Mimivirus.</title>
        <authorList>
            <person name="Raoult D."/>
            <person name="Audic S."/>
            <person name="Robert C."/>
            <person name="Abergel C."/>
            <person name="Renesto P."/>
            <person name="Ogata H."/>
            <person name="La Scola B."/>
            <person name="Susan M."/>
            <person name="Claverie J.-M."/>
        </authorList>
    </citation>
    <scope>NUCLEOTIDE SEQUENCE [LARGE SCALE GENOMIC DNA]</scope>
    <source>
        <strain>Rowbotham-Bradford</strain>
    </source>
</reference>
<accession>Q5URA5</accession>
<keyword id="KW-1185">Reference proteome</keyword>
<feature type="chain" id="PRO_0000253226" description="Uncharacterized protein L143">
    <location>
        <begin position="1"/>
        <end position="287"/>
    </location>
</feature>
<organismHost>
    <name type="scientific">Acanthamoeba polyphaga</name>
    <name type="common">Amoeba</name>
    <dbReference type="NCBI Taxonomy" id="5757"/>
</organismHost>
<proteinExistence type="predicted"/>
<dbReference type="EMBL" id="AY653733">
    <property type="protein sequence ID" value="AAV50418.1"/>
    <property type="molecule type" value="Genomic_DNA"/>
</dbReference>
<dbReference type="KEGG" id="vg:9924743"/>
<dbReference type="OrthoDB" id="31752at10239"/>
<dbReference type="Proteomes" id="UP000001134">
    <property type="component" value="Genome"/>
</dbReference>
<dbReference type="InterPro" id="IPR007345">
    <property type="entry name" value="Polysacch_pyruvyl_Trfase"/>
</dbReference>
<dbReference type="Pfam" id="PF04230">
    <property type="entry name" value="PS_pyruv_trans"/>
    <property type="match status" value="1"/>
</dbReference>
<gene>
    <name type="ordered locus">MIMI_L143</name>
</gene>
<sequence>MSLETHRKEIYIHYFVKDVNAGDRYNKFMAEKLVDAKVVCVTCETINYNPHFQFVGSIASSSNKNTVILGTGLLLQSRYIKAFKECHIVRGKYTLIYLKAFMKDVSSITLGDPGILLECFIDKENRPEPIYEYGIIPHYVDKARTKELMTSEWDDKVLYIDIQTDDLVGLAKQMLSCKKMVSSSLHGIIFAHSLGIPVTWVRFDGTKLTPDDIKFYDYLSVFGIERDQYKKYCTLIKNNLSLNDFANFPTIDIDATLIANKKQELLSKTISVLRKHNFRIRDEFSNY</sequence>